<geneLocation type="mitochondrion"/>
<keyword id="KW-0249">Electron transport</keyword>
<keyword id="KW-0349">Heme</keyword>
<keyword id="KW-0408">Iron</keyword>
<keyword id="KW-0472">Membrane</keyword>
<keyword id="KW-0479">Metal-binding</keyword>
<keyword id="KW-0496">Mitochondrion</keyword>
<keyword id="KW-0999">Mitochondrion inner membrane</keyword>
<keyword id="KW-0679">Respiratory chain</keyword>
<keyword id="KW-0812">Transmembrane</keyword>
<keyword id="KW-1133">Transmembrane helix</keyword>
<keyword id="KW-0813">Transport</keyword>
<keyword id="KW-0830">Ubiquinone</keyword>
<comment type="function">
    <text evidence="2">Component of the ubiquinol-cytochrome c reductase complex (complex III or cytochrome b-c1 complex) that is part of the mitochondrial respiratory chain. The b-c1 complex mediates electron transfer from ubiquinol to cytochrome c. Contributes to the generation of a proton gradient across the mitochondrial membrane that is then used for ATP synthesis.</text>
</comment>
<comment type="cofactor">
    <cofactor evidence="2">
        <name>heme b</name>
        <dbReference type="ChEBI" id="CHEBI:60344"/>
    </cofactor>
    <text evidence="2">Binds 2 heme b groups non-covalently.</text>
</comment>
<comment type="subunit">
    <text evidence="2">The cytochrome bc1 complex contains 3 respiratory subunits (MT-CYB, CYC1 and UQCRFS1), 2 core proteins (UQCRC1 and UQCRC2) and probably 6 low-molecular weight proteins.</text>
</comment>
<comment type="subcellular location">
    <subcellularLocation>
        <location evidence="2">Mitochondrion inner membrane</location>
        <topology evidence="2">Multi-pass membrane protein</topology>
    </subcellularLocation>
</comment>
<comment type="miscellaneous">
    <text evidence="1">Heme 1 (or BL or b562) is low-potential and absorbs at about 562 nm, and heme 2 (or BH or b566) is high-potential and absorbs at about 566 nm.</text>
</comment>
<comment type="similarity">
    <text evidence="3 4">Belongs to the cytochrome b family.</text>
</comment>
<comment type="caution">
    <text evidence="2">The full-length protein contains only eight transmembrane helices, not nine as predicted by bioinformatics tools.</text>
</comment>
<name>CYB_ANGRO</name>
<gene>
    <name type="primary">mt-cyb</name>
    <name type="synonym">cob</name>
    <name type="synonym">cytb</name>
    <name type="synonym">mtcyb</name>
</gene>
<sequence>MANLRKTHPLLKIANDALVDLPTPSNISAWWNFGSLLGLCLISQILTGLFLAMHYTSDISTAFSSVAHICRDVNYGWLIRNLHANGASFFFICLYLHIARGLYYGSYLYKETWNIGVVLFLLVMMTAFVGYVLPWGQMSFWGATVITNLLSAVPYVGNSLVQWIWGGFSVDNATLTRFFAFHFLFPFVVAGATMLHLLFLHETGSNNPVGLNSDADKIPFHPYFSYKDLLGFIIMLTALTMLALFYPNLLGDPDNFTPANPMVTPPHIKPEWYFLFAYAILRSIPNKLGGVLALLSSILVLMVVPILHTSKQRGLTFRPASQLLFWILVADMLVLTWIGGMPVEHPYIIIGQVASVLYFSLFLVLNPLVGWLENKVMNW</sequence>
<protein>
    <recommendedName>
        <fullName>Cytochrome b</fullName>
    </recommendedName>
    <alternativeName>
        <fullName>Complex III subunit 3</fullName>
    </alternativeName>
    <alternativeName>
        <fullName>Complex III subunit III</fullName>
    </alternativeName>
    <alternativeName>
        <fullName>Cytochrome b-c1 complex subunit 3</fullName>
    </alternativeName>
    <alternativeName>
        <fullName>Ubiquinol-cytochrome-c reductase complex cytochrome b subunit</fullName>
    </alternativeName>
</protein>
<reference key="1">
    <citation type="thesis" date="1998" institute="Ocean Research Institute / University of Tokyo" country="Japan">
        <title>Molecular phylogeny and evolution of the freshwater eels, genus Anguilla.</title>
        <authorList>
            <person name="Aoyama J."/>
        </authorList>
    </citation>
    <scope>NUCLEOTIDE SEQUENCE [GENOMIC DNA]</scope>
    <source>
        <tissue>Liver</tissue>
    </source>
</reference>
<reference key="2">
    <citation type="journal article" date="2001" name="Mol. Phylogenet. Evol.">
        <title>A phylogeny of freshwater eels inferred from mitochondrial genes.</title>
        <authorList>
            <person name="Lin Y.S."/>
            <person name="Poh Y.P."/>
            <person name="Tzeng C.S."/>
        </authorList>
    </citation>
    <scope>NUCLEOTIDE SEQUENCE [GENOMIC DNA]</scope>
</reference>
<reference key="3">
    <citation type="journal article" date="1992" name="Arch. Biochem. Biophys.">
        <title>Cytochrome b of fish mitochondria is strongly resistant to funiculosin, a powerful inhibitor of respiration.</title>
        <authorList>
            <person name="Esposti M.D."/>
            <person name="Ghelli A."/>
            <person name="Crimi M."/>
            <person name="Baracca A."/>
            <person name="Solaini G."/>
            <person name="Tron T."/>
            <person name="Meyer A."/>
        </authorList>
    </citation>
    <scope>NUCLEOTIDE SEQUENCE [GENOMIC DNA] OF 1-236</scope>
</reference>
<accession>P34861</accession>
<accession>Q9T3C5</accession>
<proteinExistence type="inferred from homology"/>
<dbReference type="EMBL" id="AB021767">
    <property type="protein sequence ID" value="BAB20290.1"/>
    <property type="molecule type" value="Genomic_DNA"/>
</dbReference>
<dbReference type="EMBL" id="AF006716">
    <property type="protein sequence ID" value="AAC98879.1"/>
    <property type="molecule type" value="Genomic_DNA"/>
</dbReference>
<dbReference type="EMBL" id="AF006717">
    <property type="protein sequence ID" value="AAC98880.1"/>
    <property type="molecule type" value="Genomic_DNA"/>
</dbReference>
<dbReference type="EMBL" id="M85080">
    <property type="protein sequence ID" value="AAA31636.1"/>
    <property type="molecule type" value="Genomic_DNA"/>
</dbReference>
<dbReference type="PIR" id="S21707">
    <property type="entry name" value="S21707"/>
</dbReference>
<dbReference type="RefSeq" id="YP_164036.1">
    <property type="nucleotide sequence ID" value="NC_006547.2"/>
</dbReference>
<dbReference type="SMR" id="P34861"/>
<dbReference type="GeneID" id="3190272"/>
<dbReference type="CTD" id="4519"/>
<dbReference type="GO" id="GO:0005743">
    <property type="term" value="C:mitochondrial inner membrane"/>
    <property type="evidence" value="ECO:0007669"/>
    <property type="project" value="UniProtKB-SubCell"/>
</dbReference>
<dbReference type="GO" id="GO:0045275">
    <property type="term" value="C:respiratory chain complex III"/>
    <property type="evidence" value="ECO:0007669"/>
    <property type="project" value="InterPro"/>
</dbReference>
<dbReference type="GO" id="GO:0046872">
    <property type="term" value="F:metal ion binding"/>
    <property type="evidence" value="ECO:0007669"/>
    <property type="project" value="UniProtKB-KW"/>
</dbReference>
<dbReference type="GO" id="GO:0008121">
    <property type="term" value="F:ubiquinol-cytochrome-c reductase activity"/>
    <property type="evidence" value="ECO:0007669"/>
    <property type="project" value="InterPro"/>
</dbReference>
<dbReference type="GO" id="GO:0006122">
    <property type="term" value="P:mitochondrial electron transport, ubiquinol to cytochrome c"/>
    <property type="evidence" value="ECO:0007669"/>
    <property type="project" value="TreeGrafter"/>
</dbReference>
<dbReference type="CDD" id="cd00290">
    <property type="entry name" value="cytochrome_b_C"/>
    <property type="match status" value="1"/>
</dbReference>
<dbReference type="CDD" id="cd00284">
    <property type="entry name" value="Cytochrome_b_N"/>
    <property type="match status" value="1"/>
</dbReference>
<dbReference type="FunFam" id="1.20.810.10:FF:000002">
    <property type="entry name" value="Cytochrome b"/>
    <property type="match status" value="1"/>
</dbReference>
<dbReference type="Gene3D" id="1.20.810.10">
    <property type="entry name" value="Cytochrome Bc1 Complex, Chain C"/>
    <property type="match status" value="1"/>
</dbReference>
<dbReference type="InterPro" id="IPR005798">
    <property type="entry name" value="Cyt_b/b6_C"/>
</dbReference>
<dbReference type="InterPro" id="IPR036150">
    <property type="entry name" value="Cyt_b/b6_C_sf"/>
</dbReference>
<dbReference type="InterPro" id="IPR005797">
    <property type="entry name" value="Cyt_b/b6_N"/>
</dbReference>
<dbReference type="InterPro" id="IPR027387">
    <property type="entry name" value="Cytb/b6-like_sf"/>
</dbReference>
<dbReference type="InterPro" id="IPR030689">
    <property type="entry name" value="Cytochrome_b"/>
</dbReference>
<dbReference type="InterPro" id="IPR048260">
    <property type="entry name" value="Cytochrome_b_C_euk/bac"/>
</dbReference>
<dbReference type="InterPro" id="IPR048259">
    <property type="entry name" value="Cytochrome_b_N_euk/bac"/>
</dbReference>
<dbReference type="InterPro" id="IPR016174">
    <property type="entry name" value="Di-haem_cyt_TM"/>
</dbReference>
<dbReference type="PANTHER" id="PTHR19271">
    <property type="entry name" value="CYTOCHROME B"/>
    <property type="match status" value="1"/>
</dbReference>
<dbReference type="PANTHER" id="PTHR19271:SF16">
    <property type="entry name" value="CYTOCHROME B"/>
    <property type="match status" value="1"/>
</dbReference>
<dbReference type="Pfam" id="PF00032">
    <property type="entry name" value="Cytochrom_B_C"/>
    <property type="match status" value="1"/>
</dbReference>
<dbReference type="Pfam" id="PF00033">
    <property type="entry name" value="Cytochrome_B"/>
    <property type="match status" value="1"/>
</dbReference>
<dbReference type="PIRSF" id="PIRSF038885">
    <property type="entry name" value="COB"/>
    <property type="match status" value="1"/>
</dbReference>
<dbReference type="SUPFAM" id="SSF81648">
    <property type="entry name" value="a domain/subunit of cytochrome bc1 complex (Ubiquinol-cytochrome c reductase)"/>
    <property type="match status" value="1"/>
</dbReference>
<dbReference type="SUPFAM" id="SSF81342">
    <property type="entry name" value="Transmembrane di-heme cytochromes"/>
    <property type="match status" value="1"/>
</dbReference>
<dbReference type="PROSITE" id="PS51003">
    <property type="entry name" value="CYTB_CTER"/>
    <property type="match status" value="1"/>
</dbReference>
<dbReference type="PROSITE" id="PS51002">
    <property type="entry name" value="CYTB_NTER"/>
    <property type="match status" value="1"/>
</dbReference>
<feature type="chain" id="PRO_0000060583" description="Cytochrome b">
    <location>
        <begin position="1"/>
        <end position="379"/>
    </location>
</feature>
<feature type="transmembrane region" description="Helical" evidence="2">
    <location>
        <begin position="33"/>
        <end position="53"/>
    </location>
</feature>
<feature type="transmembrane region" description="Helical" evidence="2">
    <location>
        <begin position="77"/>
        <end position="98"/>
    </location>
</feature>
<feature type="transmembrane region" description="Helical" evidence="2">
    <location>
        <begin position="113"/>
        <end position="133"/>
    </location>
</feature>
<feature type="transmembrane region" description="Helical" evidence="2">
    <location>
        <begin position="178"/>
        <end position="198"/>
    </location>
</feature>
<feature type="transmembrane region" description="Helical" evidence="2">
    <location>
        <begin position="226"/>
        <end position="246"/>
    </location>
</feature>
<feature type="transmembrane region" description="Helical" evidence="2">
    <location>
        <begin position="288"/>
        <end position="308"/>
    </location>
</feature>
<feature type="transmembrane region" description="Helical" evidence="2">
    <location>
        <begin position="320"/>
        <end position="340"/>
    </location>
</feature>
<feature type="transmembrane region" description="Helical" evidence="2">
    <location>
        <begin position="347"/>
        <end position="367"/>
    </location>
</feature>
<feature type="binding site" description="axial binding residue" evidence="2">
    <location>
        <position position="83"/>
    </location>
    <ligand>
        <name>heme b</name>
        <dbReference type="ChEBI" id="CHEBI:60344"/>
        <label>b562</label>
    </ligand>
    <ligandPart>
        <name>Fe</name>
        <dbReference type="ChEBI" id="CHEBI:18248"/>
    </ligandPart>
</feature>
<feature type="binding site" description="axial binding residue" evidence="2">
    <location>
        <position position="97"/>
    </location>
    <ligand>
        <name>heme b</name>
        <dbReference type="ChEBI" id="CHEBI:60344"/>
        <label>b566</label>
    </ligand>
    <ligandPart>
        <name>Fe</name>
        <dbReference type="ChEBI" id="CHEBI:18248"/>
    </ligandPart>
</feature>
<feature type="binding site" description="axial binding residue" evidence="2">
    <location>
        <position position="182"/>
    </location>
    <ligand>
        <name>heme b</name>
        <dbReference type="ChEBI" id="CHEBI:60344"/>
        <label>b562</label>
    </ligand>
    <ligandPart>
        <name>Fe</name>
        <dbReference type="ChEBI" id="CHEBI:18248"/>
    </ligandPart>
</feature>
<feature type="binding site" description="axial binding residue" evidence="2">
    <location>
        <position position="196"/>
    </location>
    <ligand>
        <name>heme b</name>
        <dbReference type="ChEBI" id="CHEBI:60344"/>
        <label>b566</label>
    </ligand>
    <ligandPart>
        <name>Fe</name>
        <dbReference type="ChEBI" id="CHEBI:18248"/>
    </ligandPart>
</feature>
<feature type="binding site" evidence="2">
    <location>
        <position position="201"/>
    </location>
    <ligand>
        <name>a ubiquinone</name>
        <dbReference type="ChEBI" id="CHEBI:16389"/>
    </ligand>
</feature>
<feature type="sequence conflict" description="In Ref. 3; AAA31636." evidence="5" ref="3">
    <original>F</original>
    <variation>I</variation>
    <location>
        <position position="120"/>
    </location>
</feature>
<feature type="sequence conflict" description="In Ref. 3; AAA31636." evidence="5" ref="3">
    <original>F</original>
    <variation>Y</variation>
    <location>
        <position position="168"/>
    </location>
</feature>
<feature type="sequence conflict" description="In Ref. 3; AAA31636." evidence="5" ref="3">
    <original>GA</original>
    <variation>AL</variation>
    <location>
        <begin position="191"/>
        <end position="192"/>
    </location>
</feature>
<organism>
    <name type="scientific">Anguilla rostrata</name>
    <name type="common">American eel</name>
    <name type="synonym">Muraena rostrata</name>
    <dbReference type="NCBI Taxonomy" id="7938"/>
    <lineage>
        <taxon>Eukaryota</taxon>
        <taxon>Metazoa</taxon>
        <taxon>Chordata</taxon>
        <taxon>Craniata</taxon>
        <taxon>Vertebrata</taxon>
        <taxon>Euteleostomi</taxon>
        <taxon>Actinopterygii</taxon>
        <taxon>Neopterygii</taxon>
        <taxon>Teleostei</taxon>
        <taxon>Anguilliformes</taxon>
        <taxon>Anguillidae</taxon>
        <taxon>Anguilla</taxon>
    </lineage>
</organism>
<evidence type="ECO:0000250" key="1"/>
<evidence type="ECO:0000250" key="2">
    <source>
        <dbReference type="UniProtKB" id="P00157"/>
    </source>
</evidence>
<evidence type="ECO:0000255" key="3">
    <source>
        <dbReference type="PROSITE-ProRule" id="PRU00967"/>
    </source>
</evidence>
<evidence type="ECO:0000255" key="4">
    <source>
        <dbReference type="PROSITE-ProRule" id="PRU00968"/>
    </source>
</evidence>
<evidence type="ECO:0000305" key="5"/>